<protein>
    <recommendedName>
        <fullName evidence="1">Ferrochelatase</fullName>
        <ecNumber evidence="1">4.98.1.1</ecNumber>
    </recommendedName>
    <alternativeName>
        <fullName evidence="1">Heme synthase</fullName>
    </alternativeName>
    <alternativeName>
        <fullName evidence="1">Protoheme ferro-lyase</fullName>
    </alternativeName>
</protein>
<keyword id="KW-0963">Cytoplasm</keyword>
<keyword id="KW-0350">Heme biosynthesis</keyword>
<keyword id="KW-0408">Iron</keyword>
<keyword id="KW-0456">Lyase</keyword>
<keyword id="KW-0479">Metal-binding</keyword>
<keyword id="KW-0627">Porphyrin biosynthesis</keyword>
<keyword id="KW-1185">Reference proteome</keyword>
<dbReference type="EC" id="4.98.1.1" evidence="1"/>
<dbReference type="EMBL" id="CP000462">
    <property type="protein sequence ID" value="ABK38925.1"/>
    <property type="status" value="ALT_INIT"/>
    <property type="molecule type" value="Genomic_DNA"/>
</dbReference>
<dbReference type="RefSeq" id="WP_164927663.1">
    <property type="nucleotide sequence ID" value="NC_008570.1"/>
</dbReference>
<dbReference type="RefSeq" id="YP_857002.1">
    <property type="nucleotide sequence ID" value="NC_008570.1"/>
</dbReference>
<dbReference type="SMR" id="A0KL51"/>
<dbReference type="STRING" id="380703.AHA_2488"/>
<dbReference type="EnsemblBacteria" id="ABK38925">
    <property type="protein sequence ID" value="ABK38925"/>
    <property type="gene ID" value="AHA_2488"/>
</dbReference>
<dbReference type="GeneID" id="4490789"/>
<dbReference type="KEGG" id="aha:AHA_2488"/>
<dbReference type="PATRIC" id="fig|380703.7.peg.2487"/>
<dbReference type="eggNOG" id="COG0276">
    <property type="taxonomic scope" value="Bacteria"/>
</dbReference>
<dbReference type="HOGENOM" id="CLU_018884_0_0_6"/>
<dbReference type="OrthoDB" id="9809741at2"/>
<dbReference type="UniPathway" id="UPA00252">
    <property type="reaction ID" value="UER00325"/>
</dbReference>
<dbReference type="Proteomes" id="UP000000756">
    <property type="component" value="Chromosome"/>
</dbReference>
<dbReference type="GO" id="GO:0005737">
    <property type="term" value="C:cytoplasm"/>
    <property type="evidence" value="ECO:0007669"/>
    <property type="project" value="UniProtKB-SubCell"/>
</dbReference>
<dbReference type="GO" id="GO:0004325">
    <property type="term" value="F:ferrochelatase activity"/>
    <property type="evidence" value="ECO:0007669"/>
    <property type="project" value="UniProtKB-UniRule"/>
</dbReference>
<dbReference type="GO" id="GO:0046872">
    <property type="term" value="F:metal ion binding"/>
    <property type="evidence" value="ECO:0007669"/>
    <property type="project" value="UniProtKB-KW"/>
</dbReference>
<dbReference type="GO" id="GO:0006783">
    <property type="term" value="P:heme biosynthetic process"/>
    <property type="evidence" value="ECO:0007669"/>
    <property type="project" value="UniProtKB-UniRule"/>
</dbReference>
<dbReference type="CDD" id="cd00419">
    <property type="entry name" value="Ferrochelatase_C"/>
    <property type="match status" value="1"/>
</dbReference>
<dbReference type="CDD" id="cd03411">
    <property type="entry name" value="Ferrochelatase_N"/>
    <property type="match status" value="1"/>
</dbReference>
<dbReference type="FunFam" id="3.40.50.1400:FF:000002">
    <property type="entry name" value="Ferrochelatase"/>
    <property type="match status" value="1"/>
</dbReference>
<dbReference type="Gene3D" id="3.40.50.1400">
    <property type="match status" value="2"/>
</dbReference>
<dbReference type="HAMAP" id="MF_00323">
    <property type="entry name" value="Ferrochelatase"/>
    <property type="match status" value="1"/>
</dbReference>
<dbReference type="InterPro" id="IPR001015">
    <property type="entry name" value="Ferrochelatase"/>
</dbReference>
<dbReference type="InterPro" id="IPR019772">
    <property type="entry name" value="Ferrochelatase_AS"/>
</dbReference>
<dbReference type="InterPro" id="IPR033644">
    <property type="entry name" value="Ferrochelatase_C"/>
</dbReference>
<dbReference type="InterPro" id="IPR033659">
    <property type="entry name" value="Ferrochelatase_N"/>
</dbReference>
<dbReference type="NCBIfam" id="TIGR00109">
    <property type="entry name" value="hemH"/>
    <property type="match status" value="1"/>
</dbReference>
<dbReference type="PANTHER" id="PTHR11108">
    <property type="entry name" value="FERROCHELATASE"/>
    <property type="match status" value="1"/>
</dbReference>
<dbReference type="PANTHER" id="PTHR11108:SF1">
    <property type="entry name" value="FERROCHELATASE, MITOCHONDRIAL"/>
    <property type="match status" value="1"/>
</dbReference>
<dbReference type="Pfam" id="PF00762">
    <property type="entry name" value="Ferrochelatase"/>
    <property type="match status" value="1"/>
</dbReference>
<dbReference type="SUPFAM" id="SSF53800">
    <property type="entry name" value="Chelatase"/>
    <property type="match status" value="1"/>
</dbReference>
<dbReference type="PROSITE" id="PS00534">
    <property type="entry name" value="FERROCHELATASE"/>
    <property type="match status" value="1"/>
</dbReference>
<proteinExistence type="inferred from homology"/>
<feature type="chain" id="PRO_1000072021" description="Ferrochelatase">
    <location>
        <begin position="1"/>
        <end position="324"/>
    </location>
</feature>
<feature type="binding site" evidence="1">
    <location>
        <position position="197"/>
    </location>
    <ligand>
        <name>Fe cation</name>
        <dbReference type="ChEBI" id="CHEBI:24875"/>
    </ligand>
</feature>
<feature type="binding site" evidence="1">
    <location>
        <position position="278"/>
    </location>
    <ligand>
        <name>Fe cation</name>
        <dbReference type="ChEBI" id="CHEBI:24875"/>
    </ligand>
</feature>
<reference key="1">
    <citation type="journal article" date="2006" name="J. Bacteriol.">
        <title>Genome sequence of Aeromonas hydrophila ATCC 7966T: jack of all trades.</title>
        <authorList>
            <person name="Seshadri R."/>
            <person name="Joseph S.W."/>
            <person name="Chopra A.K."/>
            <person name="Sha J."/>
            <person name="Shaw J."/>
            <person name="Graf J."/>
            <person name="Haft D.H."/>
            <person name="Wu M."/>
            <person name="Ren Q."/>
            <person name="Rosovitz M.J."/>
            <person name="Madupu R."/>
            <person name="Tallon L."/>
            <person name="Kim M."/>
            <person name="Jin S."/>
            <person name="Vuong H."/>
            <person name="Stine O.C."/>
            <person name="Ali A."/>
            <person name="Horneman A.J."/>
            <person name="Heidelberg J.F."/>
        </authorList>
    </citation>
    <scope>NUCLEOTIDE SEQUENCE [LARGE SCALE GENOMIC DNA]</scope>
    <source>
        <strain>ATCC 7966 / DSM 30187 / BCRC 13018 / CCUG 14551 / JCM 1027 / KCTC 2358 / NCIMB 9240 / NCTC 8049</strain>
    </source>
</reference>
<organism>
    <name type="scientific">Aeromonas hydrophila subsp. hydrophila (strain ATCC 7966 / DSM 30187 / BCRC 13018 / CCUG 14551 / JCM 1027 / KCTC 2358 / NCIMB 9240 / NCTC 8049)</name>
    <dbReference type="NCBI Taxonomy" id="380703"/>
    <lineage>
        <taxon>Bacteria</taxon>
        <taxon>Pseudomonadati</taxon>
        <taxon>Pseudomonadota</taxon>
        <taxon>Gammaproteobacteria</taxon>
        <taxon>Aeromonadales</taxon>
        <taxon>Aeromonadaceae</taxon>
        <taxon>Aeromonas</taxon>
    </lineage>
</organism>
<gene>
    <name evidence="1" type="primary">hemH</name>
    <name type="ordered locus">AHA_2488</name>
</gene>
<name>HEMH_AERHH</name>
<sequence length="324" mass="36580">MTTKTGILLVNLGTPAAPTTAAVKAFLSQFLHDQRVVDLPRYLWCPLLHFIILPTRSPKVAKLYQQVWTEQGSPLMVISKQQRAALEQELKREGVEVPVELAMTYGSPSLDEGWQALKAKGVNRVILLPLYPQYSVSTTASVFDGWAKAMKKERNLPVVRLIRDYHAHPEYIQALAMSVRRHWEQHGQGEHLLMSFHGIPERYEREGDPYGHQCRRTAALLAEVLGLEASQWTASFQSRFGKEEWLKPYTDVTIAGLPATGIKRLDVICPAFAADCLETLEEIQVQNREIFMAAGGEQFEYIPALNSDQAHIRMMVSLICRELA</sequence>
<accession>A0KL51</accession>
<comment type="function">
    <text evidence="1">Catalyzes the ferrous insertion into protoporphyrin IX.</text>
</comment>
<comment type="catalytic activity">
    <reaction evidence="1">
        <text>heme b + 2 H(+) = protoporphyrin IX + Fe(2+)</text>
        <dbReference type="Rhea" id="RHEA:22584"/>
        <dbReference type="ChEBI" id="CHEBI:15378"/>
        <dbReference type="ChEBI" id="CHEBI:29033"/>
        <dbReference type="ChEBI" id="CHEBI:57306"/>
        <dbReference type="ChEBI" id="CHEBI:60344"/>
        <dbReference type="EC" id="4.98.1.1"/>
    </reaction>
</comment>
<comment type="pathway">
    <text evidence="1">Porphyrin-containing compound metabolism; protoheme biosynthesis; protoheme from protoporphyrin-IX: step 1/1.</text>
</comment>
<comment type="subcellular location">
    <subcellularLocation>
        <location evidence="1">Cytoplasm</location>
    </subcellularLocation>
</comment>
<comment type="similarity">
    <text evidence="1">Belongs to the ferrochelatase family.</text>
</comment>
<comment type="sequence caution" evidence="2">
    <conflict type="erroneous initiation">
        <sequence resource="EMBL-CDS" id="ABK38925"/>
    </conflict>
    <text>Extended N-terminus.</text>
</comment>
<evidence type="ECO:0000255" key="1">
    <source>
        <dbReference type="HAMAP-Rule" id="MF_00323"/>
    </source>
</evidence>
<evidence type="ECO:0000305" key="2"/>